<reference key="1">
    <citation type="journal article" date="2005" name="BMC Genomics">
        <title>Characterization of 954 bovine full-CDS cDNA sequences.</title>
        <authorList>
            <person name="Harhay G.P."/>
            <person name="Sonstegard T.S."/>
            <person name="Keele J.W."/>
            <person name="Heaton M.P."/>
            <person name="Clawson M.L."/>
            <person name="Snelling W.M."/>
            <person name="Wiedmann R.T."/>
            <person name="Van Tassell C.P."/>
            <person name="Smith T.P.L."/>
        </authorList>
    </citation>
    <scope>NUCLEOTIDE SEQUENCE [LARGE SCALE MRNA]</scope>
</reference>
<reference key="2">
    <citation type="submission" date="2006-06" db="EMBL/GenBank/DDBJ databases">
        <authorList>
            <consortium name="NIH - Mammalian Gene Collection (MGC) project"/>
        </authorList>
    </citation>
    <scope>NUCLEOTIDE SEQUENCE [LARGE SCALE MRNA]</scope>
    <source>
        <strain>Hereford</strain>
        <tissue>Fetal cerebellum</tissue>
    </source>
</reference>
<feature type="signal peptide" evidence="2">
    <location>
        <begin position="1"/>
        <end position="19"/>
    </location>
</feature>
<feature type="chain" id="PRO_0000280607" description="Chitinase domain-containing protein 1">
    <location>
        <begin position="20"/>
        <end position="393"/>
    </location>
</feature>
<feature type="domain" description="GH18" evidence="3">
    <location>
        <begin position="79"/>
        <end position="393"/>
    </location>
</feature>
<feature type="sequence conflict" description="In Ref. 2; AAI18450." evidence="4" ref="2">
    <original>V</original>
    <variation>M</variation>
    <location>
        <position position="190"/>
    </location>
</feature>
<evidence type="ECO:0000250" key="1"/>
<evidence type="ECO:0000255" key="2"/>
<evidence type="ECO:0000255" key="3">
    <source>
        <dbReference type="PROSITE-ProRule" id="PRU01258"/>
    </source>
</evidence>
<evidence type="ECO:0000305" key="4"/>
<sequence length="393" mass="44562">MRVLLGTLWLTLACSSVHATLSKSDAKKAASKTLQEKTQVSGKPAQERGLVVTDLRAEDVVLEHRSYCSAKAHRKHFAGDVLGYITPWNRHGYDVAKIFGGKFTHVAPVWLQLRRHGREMFEVTGLDDVDQGWLRAVRKQAKGLRIVPRLRFEDWTYEDFDSVLDNEDEIEELSRTVVQVAKSQHFDGLVVEVWNQLLVQKHAGLIHLLTHMAEALHQARLLVFLVIPPAVAPGTNKLGMFTNTEFEQLAPVLDGFSLMTYDYSTAQPAGPNAPLPWVRACVQVLDPKSKWRSKILLGLNFYGMDYSASKDAREPIIGARYIQTLKDHRPQVVWDSQAAEHFFEYKKSRGGRHVVFYPTLKSLQERLELAQELGVGLSIWELGQGLDYFYDLL</sequence>
<organism>
    <name type="scientific">Bos taurus</name>
    <name type="common">Bovine</name>
    <dbReference type="NCBI Taxonomy" id="9913"/>
    <lineage>
        <taxon>Eukaryota</taxon>
        <taxon>Metazoa</taxon>
        <taxon>Chordata</taxon>
        <taxon>Craniata</taxon>
        <taxon>Vertebrata</taxon>
        <taxon>Euteleostomi</taxon>
        <taxon>Mammalia</taxon>
        <taxon>Eutheria</taxon>
        <taxon>Laurasiatheria</taxon>
        <taxon>Artiodactyla</taxon>
        <taxon>Ruminantia</taxon>
        <taxon>Pecora</taxon>
        <taxon>Bovidae</taxon>
        <taxon>Bovinae</taxon>
        <taxon>Bos</taxon>
    </lineage>
</organism>
<dbReference type="EMBL" id="BT020630">
    <property type="protein sequence ID" value="AAX08647.1"/>
    <property type="molecule type" value="mRNA"/>
</dbReference>
<dbReference type="EMBL" id="BT020655">
    <property type="protein sequence ID" value="AAX08672.1"/>
    <property type="molecule type" value="mRNA"/>
</dbReference>
<dbReference type="EMBL" id="BT020789">
    <property type="protein sequence ID" value="AAX08806.1"/>
    <property type="molecule type" value="mRNA"/>
</dbReference>
<dbReference type="EMBL" id="BT020873">
    <property type="protein sequence ID" value="AAX08890.1"/>
    <property type="molecule type" value="mRNA"/>
</dbReference>
<dbReference type="EMBL" id="BT021168">
    <property type="protein sequence ID" value="AAX31350.1"/>
    <property type="molecule type" value="mRNA"/>
</dbReference>
<dbReference type="EMBL" id="BT021170">
    <property type="protein sequence ID" value="AAX31352.1"/>
    <property type="molecule type" value="mRNA"/>
</dbReference>
<dbReference type="EMBL" id="BT021178">
    <property type="protein sequence ID" value="AAX31360.1"/>
    <property type="molecule type" value="mRNA"/>
</dbReference>
<dbReference type="EMBL" id="BC118449">
    <property type="protein sequence ID" value="AAI18450.1"/>
    <property type="molecule type" value="mRNA"/>
</dbReference>
<dbReference type="RefSeq" id="NP_001015515.1">
    <property type="nucleotide sequence ID" value="NM_001015515.1"/>
</dbReference>
<dbReference type="RefSeq" id="XP_024842771.1">
    <property type="nucleotide sequence ID" value="XM_024987003.2"/>
</dbReference>
<dbReference type="RefSeq" id="XP_059738764.1">
    <property type="nucleotide sequence ID" value="XM_059882781.1"/>
</dbReference>
<dbReference type="SMR" id="Q5EAB4"/>
<dbReference type="FunCoup" id="Q5EAB4">
    <property type="interactions" value="2203"/>
</dbReference>
<dbReference type="STRING" id="9913.ENSBTAP00000013065"/>
<dbReference type="Ensembl" id="ENSBTAT00000054178.3">
    <property type="protein sequence ID" value="ENSBTAP00000050339.2"/>
    <property type="gene ID" value="ENSBTAG00000009899.7"/>
</dbReference>
<dbReference type="GeneID" id="504781"/>
<dbReference type="KEGG" id="bta:504781"/>
<dbReference type="CTD" id="66005"/>
<dbReference type="VEuPathDB" id="HostDB:ENSBTAG00000009899"/>
<dbReference type="VGNC" id="VGNC:27294">
    <property type="gene designation" value="CHID1"/>
</dbReference>
<dbReference type="GeneTree" id="ENSGT00390000012069"/>
<dbReference type="HOGENOM" id="CLU_035132_2_0_1"/>
<dbReference type="InParanoid" id="Q5EAB4"/>
<dbReference type="OMA" id="YSINERI"/>
<dbReference type="OrthoDB" id="10254444at2759"/>
<dbReference type="Reactome" id="R-BTA-114608">
    <property type="pathway name" value="Platelet degranulation"/>
</dbReference>
<dbReference type="Proteomes" id="UP000009136">
    <property type="component" value="Chromosome 29"/>
</dbReference>
<dbReference type="Bgee" id="ENSBTAG00000009899">
    <property type="expression patterns" value="Expressed in saliva-secreting gland and 112 other cell types or tissues"/>
</dbReference>
<dbReference type="GO" id="GO:0012505">
    <property type="term" value="C:endomembrane system"/>
    <property type="evidence" value="ECO:0000318"/>
    <property type="project" value="GO_Central"/>
</dbReference>
<dbReference type="GO" id="GO:0005576">
    <property type="term" value="C:extracellular region"/>
    <property type="evidence" value="ECO:0007669"/>
    <property type="project" value="UniProtKB-SubCell"/>
</dbReference>
<dbReference type="GO" id="GO:0005764">
    <property type="term" value="C:lysosome"/>
    <property type="evidence" value="ECO:0007669"/>
    <property type="project" value="UniProtKB-SubCell"/>
</dbReference>
<dbReference type="GO" id="GO:0008061">
    <property type="term" value="F:chitin binding"/>
    <property type="evidence" value="ECO:0007669"/>
    <property type="project" value="InterPro"/>
</dbReference>
<dbReference type="GO" id="GO:0070492">
    <property type="term" value="F:oligosaccharide binding"/>
    <property type="evidence" value="ECO:0000318"/>
    <property type="project" value="GO_Central"/>
</dbReference>
<dbReference type="GO" id="GO:0005975">
    <property type="term" value="P:carbohydrate metabolic process"/>
    <property type="evidence" value="ECO:0007669"/>
    <property type="project" value="InterPro"/>
</dbReference>
<dbReference type="GO" id="GO:0045087">
    <property type="term" value="P:innate immune response"/>
    <property type="evidence" value="ECO:0007669"/>
    <property type="project" value="UniProtKB-KW"/>
</dbReference>
<dbReference type="CDD" id="cd02876">
    <property type="entry name" value="GH18_SI-CLP"/>
    <property type="match status" value="1"/>
</dbReference>
<dbReference type="FunFam" id="3.10.50.10:FF:000002">
    <property type="entry name" value="Chitinase domain-containing protein 1"/>
    <property type="match status" value="1"/>
</dbReference>
<dbReference type="FunFam" id="3.20.20.80:FF:000028">
    <property type="entry name" value="Chitinase domain-containing protein 1"/>
    <property type="match status" value="1"/>
</dbReference>
<dbReference type="Gene3D" id="3.10.50.10">
    <property type="match status" value="1"/>
</dbReference>
<dbReference type="Gene3D" id="1.10.8.360">
    <property type="entry name" value="3,6-anhydro-alpha-l-galactosidase"/>
    <property type="match status" value="1"/>
</dbReference>
<dbReference type="Gene3D" id="3.20.20.80">
    <property type="entry name" value="Glycosidases"/>
    <property type="match status" value="1"/>
</dbReference>
<dbReference type="InterPro" id="IPR011583">
    <property type="entry name" value="Chitinase_II/V-like_cat"/>
</dbReference>
<dbReference type="InterPro" id="IPR029070">
    <property type="entry name" value="Chitinase_insertion_sf"/>
</dbReference>
<dbReference type="InterPro" id="IPR001223">
    <property type="entry name" value="Glyco_hydro18_cat"/>
</dbReference>
<dbReference type="InterPro" id="IPR017853">
    <property type="entry name" value="Glycoside_hydrolase_SF"/>
</dbReference>
<dbReference type="PANTHER" id="PTHR46066:SF2">
    <property type="entry name" value="CHITINASE DOMAIN-CONTAINING PROTEIN 1"/>
    <property type="match status" value="1"/>
</dbReference>
<dbReference type="PANTHER" id="PTHR46066">
    <property type="entry name" value="CHITINASE DOMAIN-CONTAINING PROTEIN 1 FAMILY MEMBER"/>
    <property type="match status" value="1"/>
</dbReference>
<dbReference type="Pfam" id="PF00704">
    <property type="entry name" value="Glyco_hydro_18"/>
    <property type="match status" value="1"/>
</dbReference>
<dbReference type="SMART" id="SM00636">
    <property type="entry name" value="Glyco_18"/>
    <property type="match status" value="1"/>
</dbReference>
<dbReference type="SUPFAM" id="SSF51445">
    <property type="entry name" value="(Trans)glycosidases"/>
    <property type="match status" value="1"/>
</dbReference>
<dbReference type="PROSITE" id="PS51910">
    <property type="entry name" value="GH18_2"/>
    <property type="match status" value="1"/>
</dbReference>
<gene>
    <name type="primary">CHID1</name>
</gene>
<proteinExistence type="evidence at transcript level"/>
<comment type="function">
    <text evidence="1">Saccharide- and LPS-binding protein with possible roles in pathogen sensing and endotoxin neutralization. Ligand-binding specificity relates to the length of the oligosaccharides, with preference for chitotetraose (in vitro) (By similarity).</text>
</comment>
<comment type="subunit">
    <text evidence="1">Interacts with STAB1.</text>
</comment>
<comment type="subcellular location">
    <subcellularLocation>
        <location>Secreted</location>
    </subcellularLocation>
    <subcellularLocation>
        <location evidence="1">Lysosome</location>
    </subcellularLocation>
</comment>
<comment type="similarity">
    <text evidence="4">Belongs to the glycosyl hydrolase 18 family.</text>
</comment>
<keyword id="KW-0391">Immunity</keyword>
<keyword id="KW-0399">Innate immunity</keyword>
<keyword id="KW-0458">Lysosome</keyword>
<keyword id="KW-1185">Reference proteome</keyword>
<keyword id="KW-0964">Secreted</keyword>
<keyword id="KW-0732">Signal</keyword>
<name>CHID1_BOVIN</name>
<protein>
    <recommendedName>
        <fullName>Chitinase domain-containing protein 1</fullName>
    </recommendedName>
</protein>
<accession>Q5EAB4</accession>
<accession>Q17QB6</accession>